<comment type="function">
    <text evidence="1">Part of the ABC transporter complex PstSACB involved in phosphate import. Responsible for energy coupling to the transport system.</text>
</comment>
<comment type="catalytic activity">
    <reaction evidence="1">
        <text>phosphate(out) + ATP + H2O = ADP + 2 phosphate(in) + H(+)</text>
        <dbReference type="Rhea" id="RHEA:24440"/>
        <dbReference type="ChEBI" id="CHEBI:15377"/>
        <dbReference type="ChEBI" id="CHEBI:15378"/>
        <dbReference type="ChEBI" id="CHEBI:30616"/>
        <dbReference type="ChEBI" id="CHEBI:43474"/>
        <dbReference type="ChEBI" id="CHEBI:456216"/>
        <dbReference type="EC" id="7.3.2.1"/>
    </reaction>
</comment>
<comment type="subunit">
    <text evidence="1">The complex is composed of two ATP-binding proteins (PstB), two transmembrane proteins (PstC and PstA) and a solute-binding protein (PstS).</text>
</comment>
<comment type="subcellular location">
    <subcellularLocation>
        <location evidence="1">Cell membrane</location>
        <topology evidence="1">Peripheral membrane protein</topology>
    </subcellularLocation>
</comment>
<comment type="similarity">
    <text evidence="1">Belongs to the ABC transporter superfamily. Phosphate importer (TC 3.A.1.7) family.</text>
</comment>
<name>PSTB2_STRP6</name>
<gene>
    <name evidence="1" type="primary">pstB2</name>
    <name type="ordered locus">M6_Spy0942</name>
</gene>
<sequence>MTEYNWNERHIITFPEETLALATKDLHVYYGAKEAIKGIDMQFEKHKITALIGPSGCGKSTYLRSLNRMNDTIDIARVTGEILYQGIDVNRKDMNVYEIRKHLGMVFQRPNPFAKSIYKNITFAHERAGVKDKKVLDEIVETSLKQAALWDQVKDDLHKSAFTLSGGQQQRLCIARAISVKPDILLMDEPASALDPIATMQLEETMFELKKNYTIIIVTHNMQQAARASDYTAFFYLGNLIEYDKTRNIFQNAQCQSTNDYVSGHFG</sequence>
<evidence type="ECO:0000255" key="1">
    <source>
        <dbReference type="HAMAP-Rule" id="MF_01702"/>
    </source>
</evidence>
<organism>
    <name type="scientific">Streptococcus pyogenes serotype M6 (strain ATCC BAA-946 / MGAS10394)</name>
    <dbReference type="NCBI Taxonomy" id="286636"/>
    <lineage>
        <taxon>Bacteria</taxon>
        <taxon>Bacillati</taxon>
        <taxon>Bacillota</taxon>
        <taxon>Bacilli</taxon>
        <taxon>Lactobacillales</taxon>
        <taxon>Streptococcaceae</taxon>
        <taxon>Streptococcus</taxon>
    </lineage>
</organism>
<dbReference type="EC" id="7.3.2.1" evidence="1"/>
<dbReference type="EMBL" id="CP000003">
    <property type="protein sequence ID" value="AAT87077.1"/>
    <property type="molecule type" value="Genomic_DNA"/>
</dbReference>
<dbReference type="SMR" id="Q5XBY6"/>
<dbReference type="KEGG" id="spa:M6_Spy0942"/>
<dbReference type="HOGENOM" id="CLU_000604_1_22_9"/>
<dbReference type="Proteomes" id="UP000001167">
    <property type="component" value="Chromosome"/>
</dbReference>
<dbReference type="GO" id="GO:0005886">
    <property type="term" value="C:plasma membrane"/>
    <property type="evidence" value="ECO:0007669"/>
    <property type="project" value="UniProtKB-SubCell"/>
</dbReference>
<dbReference type="GO" id="GO:0005524">
    <property type="term" value="F:ATP binding"/>
    <property type="evidence" value="ECO:0007669"/>
    <property type="project" value="UniProtKB-KW"/>
</dbReference>
<dbReference type="GO" id="GO:0016887">
    <property type="term" value="F:ATP hydrolysis activity"/>
    <property type="evidence" value="ECO:0007669"/>
    <property type="project" value="InterPro"/>
</dbReference>
<dbReference type="GO" id="GO:0015415">
    <property type="term" value="F:ATPase-coupled phosphate ion transmembrane transporter activity"/>
    <property type="evidence" value="ECO:0007669"/>
    <property type="project" value="UniProtKB-EC"/>
</dbReference>
<dbReference type="GO" id="GO:0035435">
    <property type="term" value="P:phosphate ion transmembrane transport"/>
    <property type="evidence" value="ECO:0007669"/>
    <property type="project" value="InterPro"/>
</dbReference>
<dbReference type="CDD" id="cd03260">
    <property type="entry name" value="ABC_PstB_phosphate_transporter"/>
    <property type="match status" value="1"/>
</dbReference>
<dbReference type="Gene3D" id="3.40.50.300">
    <property type="entry name" value="P-loop containing nucleotide triphosphate hydrolases"/>
    <property type="match status" value="1"/>
</dbReference>
<dbReference type="InterPro" id="IPR003593">
    <property type="entry name" value="AAA+_ATPase"/>
</dbReference>
<dbReference type="InterPro" id="IPR003439">
    <property type="entry name" value="ABC_transporter-like_ATP-bd"/>
</dbReference>
<dbReference type="InterPro" id="IPR017871">
    <property type="entry name" value="ABC_transporter-like_CS"/>
</dbReference>
<dbReference type="InterPro" id="IPR027417">
    <property type="entry name" value="P-loop_NTPase"/>
</dbReference>
<dbReference type="InterPro" id="IPR005670">
    <property type="entry name" value="PstB-like"/>
</dbReference>
<dbReference type="NCBIfam" id="TIGR00972">
    <property type="entry name" value="3a0107s01c2"/>
    <property type="match status" value="1"/>
</dbReference>
<dbReference type="PANTHER" id="PTHR43423">
    <property type="entry name" value="ABC TRANSPORTER I FAMILY MEMBER 17"/>
    <property type="match status" value="1"/>
</dbReference>
<dbReference type="PANTHER" id="PTHR43423:SF10">
    <property type="entry name" value="PHOSPHATE IMPORT ATP-BINDING PROTEIN PSTB 2"/>
    <property type="match status" value="1"/>
</dbReference>
<dbReference type="Pfam" id="PF00005">
    <property type="entry name" value="ABC_tran"/>
    <property type="match status" value="1"/>
</dbReference>
<dbReference type="SMART" id="SM00382">
    <property type="entry name" value="AAA"/>
    <property type="match status" value="1"/>
</dbReference>
<dbReference type="SUPFAM" id="SSF52540">
    <property type="entry name" value="P-loop containing nucleoside triphosphate hydrolases"/>
    <property type="match status" value="1"/>
</dbReference>
<dbReference type="PROSITE" id="PS00211">
    <property type="entry name" value="ABC_TRANSPORTER_1"/>
    <property type="match status" value="1"/>
</dbReference>
<dbReference type="PROSITE" id="PS50893">
    <property type="entry name" value="ABC_TRANSPORTER_2"/>
    <property type="match status" value="1"/>
</dbReference>
<dbReference type="PROSITE" id="PS51238">
    <property type="entry name" value="PSTB"/>
    <property type="match status" value="1"/>
</dbReference>
<accession>Q5XBY6</accession>
<proteinExistence type="inferred from homology"/>
<reference key="1">
    <citation type="journal article" date="2004" name="J. Infect. Dis.">
        <title>Progress toward characterization of the group A Streptococcus metagenome: complete genome sequence of a macrolide-resistant serotype M6 strain.</title>
        <authorList>
            <person name="Banks D.J."/>
            <person name="Porcella S.F."/>
            <person name="Barbian K.D."/>
            <person name="Beres S.B."/>
            <person name="Philips L.E."/>
            <person name="Voyich J.M."/>
            <person name="DeLeo F.R."/>
            <person name="Martin J.M."/>
            <person name="Somerville G.A."/>
            <person name="Musser J.M."/>
        </authorList>
    </citation>
    <scope>NUCLEOTIDE SEQUENCE [LARGE SCALE GENOMIC DNA]</scope>
    <source>
        <strain>ATCC BAA-946 / MGAS10394</strain>
    </source>
</reference>
<protein>
    <recommendedName>
        <fullName evidence="1">Phosphate import ATP-binding protein PstB 2</fullName>
        <ecNumber evidence="1">7.3.2.1</ecNumber>
    </recommendedName>
    <alternativeName>
        <fullName evidence="1">ABC phosphate transporter 2</fullName>
    </alternativeName>
    <alternativeName>
        <fullName evidence="1">Phosphate-transporting ATPase 2</fullName>
    </alternativeName>
</protein>
<feature type="chain" id="PRO_0000092908" description="Phosphate import ATP-binding protein PstB 2">
    <location>
        <begin position="1"/>
        <end position="267"/>
    </location>
</feature>
<feature type="domain" description="ABC transporter" evidence="1">
    <location>
        <begin position="21"/>
        <end position="262"/>
    </location>
</feature>
<feature type="binding site" evidence="1">
    <location>
        <begin position="53"/>
        <end position="60"/>
    </location>
    <ligand>
        <name>ATP</name>
        <dbReference type="ChEBI" id="CHEBI:30616"/>
    </ligand>
</feature>
<keyword id="KW-0067">ATP-binding</keyword>
<keyword id="KW-1003">Cell membrane</keyword>
<keyword id="KW-0472">Membrane</keyword>
<keyword id="KW-0547">Nucleotide-binding</keyword>
<keyword id="KW-0592">Phosphate transport</keyword>
<keyword id="KW-1278">Translocase</keyword>
<keyword id="KW-0813">Transport</keyword>